<name>THS1_PAPSO</name>
<comment type="function">
    <text evidence="2">Catalyzes the formation of thebaine from (7S)-salutaridinol 7-O-acetate at the expense of labile hydroxylated by-products, which are preferentially produced by spontaneous allylic elimination.</text>
</comment>
<comment type="catalytic activity">
    <reaction evidence="2">
        <text>(7S)-O-acetylsalutaridinol = thebaine + acetate + H(+)</text>
        <dbReference type="Rhea" id="RHEA:56908"/>
        <dbReference type="ChEBI" id="CHEBI:15378"/>
        <dbReference type="ChEBI" id="CHEBI:30089"/>
        <dbReference type="ChEBI" id="CHEBI:57672"/>
        <dbReference type="ChEBI" id="CHEBI:59953"/>
        <dbReference type="EC" id="4.2.99.24"/>
    </reaction>
    <physiologicalReaction direction="left-to-right" evidence="2">
        <dbReference type="Rhea" id="RHEA:56909"/>
    </physiologicalReaction>
</comment>
<comment type="pathway">
    <text evidence="2">Alkaloid biosynthesis; morphine biosynthesis.</text>
</comment>
<comment type="subunit">
    <text evidence="2">Homodimer (allosteric) and oligomers.</text>
</comment>
<comment type="tissue specificity">
    <text evidence="2">Expressed in poppy latex.</text>
</comment>
<comment type="disruption phenotype">
    <text evidence="2">Plants lacking both THS1 and THS2 exhibit reduced thebaine levels but accumulation of the upstream intermediates salutaridinol and reticuline.</text>
</comment>
<comment type="similarity">
    <text evidence="4">Belongs to the MLP family.</text>
</comment>
<organism>
    <name type="scientific">Papaver somniferum</name>
    <name type="common">Opium poppy</name>
    <dbReference type="NCBI Taxonomy" id="3469"/>
    <lineage>
        <taxon>Eukaryota</taxon>
        <taxon>Viridiplantae</taxon>
        <taxon>Streptophyta</taxon>
        <taxon>Embryophyta</taxon>
        <taxon>Tracheophyta</taxon>
        <taxon>Spermatophyta</taxon>
        <taxon>Magnoliopsida</taxon>
        <taxon>Ranunculales</taxon>
        <taxon>Papaveraceae</taxon>
        <taxon>Papaveroideae</taxon>
        <taxon>Papaver</taxon>
    </lineage>
</organism>
<reference key="1">
    <citation type="journal article" date="2018" name="Nat. Chem. Biol.">
        <title>A pathogenesis-related 10 protein catalyzes the final step in thebaine biosynthesis.</title>
        <authorList>
            <person name="Chen X."/>
            <person name="Hagel J.M."/>
            <person name="Chang L."/>
            <person name="Tucker J.E."/>
            <person name="Shiigi S.A."/>
            <person name="Yelpaala Y."/>
            <person name="Chen H.-Y."/>
            <person name="Estrada R."/>
            <person name="Colbeck J."/>
            <person name="Enquist-Newman M."/>
            <person name="Ibanez A.B."/>
            <person name="Cottarel G."/>
            <person name="Vidanes G.M."/>
            <person name="Facchini P.J."/>
        </authorList>
    </citation>
    <scope>NUCLEOTIDE SEQUENCE [MRNA]</scope>
    <scope>FUNCTION</scope>
    <scope>DISRUPTION PHENOTYPE</scope>
    <scope>CATALYTIC ACTIVITY</scope>
    <scope>PATHWAY</scope>
    <scope>TISSUE SPECIFICITY</scope>
    <scope>SUBUNIT</scope>
    <source>
        <tissue>Latex</tissue>
    </source>
</reference>
<sequence>MDSINSSIYFCAYFRELIIKLLMAPLGVSGLVGKLSTELEVDCDAEKYYNMYKHGEDVQKAVPHLCVDVKVISGDPTRSGCIKEWNVNIDGKTIRSVEETTHNDETKTLRHRVFEGDMMKDFKKFDTIMVVNPKPDGNGCVVTRSIEYEKTNENSPTPFDYLQFGHQAIEDMNKYLRDSE</sequence>
<feature type="chain" id="PRO_0000446001" description="Thebaine synthase 1">
    <location>
        <begin position="1"/>
        <end position="180"/>
    </location>
</feature>
<feature type="active site" description="Proton acceptor" evidence="1">
    <location>
        <position position="111"/>
    </location>
</feature>
<feature type="binding site" evidence="1">
    <location>
        <position position="96"/>
    </location>
    <ligand>
        <name>thebaine</name>
        <dbReference type="ChEBI" id="CHEBI:59953"/>
    </ligand>
</feature>
<feature type="binding site" evidence="1">
    <location>
        <position position="127"/>
    </location>
    <ligand>
        <name>thebaine</name>
        <dbReference type="ChEBI" id="CHEBI:59953"/>
    </ligand>
</feature>
<dbReference type="EC" id="4.2.99.24" evidence="2"/>
<dbReference type="EMBL" id="MH011342">
    <property type="protein sequence ID" value="AWQ63979.1"/>
    <property type="molecule type" value="mRNA"/>
</dbReference>
<dbReference type="SMR" id="A0A2U9GHG9"/>
<dbReference type="BioCyc" id="MetaCyc:MONOMER-20777"/>
<dbReference type="BRENDA" id="4.2.99.24">
    <property type="organism ID" value="4515"/>
</dbReference>
<dbReference type="UniPathway" id="UPA00852"/>
<dbReference type="GO" id="GO:0016835">
    <property type="term" value="F:carbon-oxygen lyase activity"/>
    <property type="evidence" value="ECO:0000315"/>
    <property type="project" value="UniProtKB"/>
</dbReference>
<dbReference type="GO" id="GO:0042803">
    <property type="term" value="F:protein homodimerization activity"/>
    <property type="evidence" value="ECO:0000314"/>
    <property type="project" value="UniProtKB"/>
</dbReference>
<dbReference type="GO" id="GO:0009820">
    <property type="term" value="P:alkaloid metabolic process"/>
    <property type="evidence" value="ECO:0000315"/>
    <property type="project" value="UniProtKB"/>
</dbReference>
<dbReference type="GO" id="GO:0006952">
    <property type="term" value="P:defense response"/>
    <property type="evidence" value="ECO:0007669"/>
    <property type="project" value="InterPro"/>
</dbReference>
<dbReference type="FunFam" id="3.30.530.20:FF:000118">
    <property type="entry name" value="Thebaine synthase 1"/>
    <property type="match status" value="1"/>
</dbReference>
<dbReference type="Gene3D" id="3.30.530.20">
    <property type="match status" value="1"/>
</dbReference>
<dbReference type="InterPro" id="IPR000916">
    <property type="entry name" value="Bet_v_I/MLP"/>
</dbReference>
<dbReference type="InterPro" id="IPR052006">
    <property type="entry name" value="MLP-like"/>
</dbReference>
<dbReference type="InterPro" id="IPR023393">
    <property type="entry name" value="START-like_dom_sf"/>
</dbReference>
<dbReference type="PANTHER" id="PTHR31338">
    <property type="entry name" value="POLYKETIDE CYCLASE/DEHYDRASE AND LIPID TRANSPORT SUPERFAMILY PROTEIN"/>
    <property type="match status" value="1"/>
</dbReference>
<dbReference type="PANTHER" id="PTHR31338:SF16">
    <property type="entry name" value="POLYKETIDE CYCLASE_DEHYDRASE AND LIPID TRANSPORT SUPERFAMILY PROTEIN"/>
    <property type="match status" value="1"/>
</dbReference>
<dbReference type="Pfam" id="PF00407">
    <property type="entry name" value="Bet_v_1"/>
    <property type="match status" value="1"/>
</dbReference>
<dbReference type="SMART" id="SM01037">
    <property type="entry name" value="Bet_v_1"/>
    <property type="match status" value="1"/>
</dbReference>
<dbReference type="SUPFAM" id="SSF55961">
    <property type="entry name" value="Bet v1-like"/>
    <property type="match status" value="1"/>
</dbReference>
<evidence type="ECO:0000250" key="1">
    <source>
        <dbReference type="UniProtKB" id="A0A2U9GGW3"/>
    </source>
</evidence>
<evidence type="ECO:0000269" key="2">
    <source>
    </source>
</evidence>
<evidence type="ECO:0000303" key="3">
    <source>
    </source>
</evidence>
<evidence type="ECO:0000305" key="4"/>
<accession>A0A2U9GHG9</accession>
<proteinExistence type="evidence at protein level"/>
<keyword id="KW-0017">Alkaloid metabolism</keyword>
<keyword id="KW-0456">Lyase</keyword>
<gene>
    <name evidence="3" type="primary">THS1</name>
</gene>
<protein>
    <recommendedName>
        <fullName evidence="3">Thebaine synthase 1</fullName>
        <ecNumber evidence="2">4.2.99.24</ecNumber>
    </recommendedName>
</protein>